<feature type="chain" id="PRO_0000206649" description="Secretion-regulating guanine nucleotide exchange factor">
    <location>
        <begin position="1"/>
        <end position="458"/>
    </location>
</feature>
<feature type="repeat" description="RCC1 1">
    <location>
        <begin position="15"/>
        <end position="67"/>
    </location>
</feature>
<feature type="repeat" description="RCC1 2">
    <location>
        <begin position="68"/>
        <end position="119"/>
    </location>
</feature>
<feature type="repeat" description="RCC1 3">
    <location>
        <begin position="120"/>
        <end position="171"/>
    </location>
</feature>
<feature type="repeat" description="RCC1 4">
    <location>
        <begin position="172"/>
        <end position="230"/>
    </location>
</feature>
<feature type="repeat" description="RCC1 5">
    <location>
        <begin position="231"/>
        <end position="283"/>
    </location>
</feature>
<feature type="repeat" description="RCC1 6">
    <location>
        <begin position="284"/>
        <end position="351"/>
    </location>
</feature>
<feature type="repeat" description="RCC1 7">
    <location>
        <begin position="352"/>
        <end position="402"/>
    </location>
</feature>
<feature type="region of interest" description="Disordered" evidence="1">
    <location>
        <begin position="420"/>
        <end position="458"/>
    </location>
</feature>
<feature type="compositionally biased region" description="Basic and acidic residues" evidence="1">
    <location>
        <begin position="426"/>
        <end position="442"/>
    </location>
</feature>
<feature type="modified residue" description="Phosphoserine" evidence="5">
    <location>
        <position position="427"/>
    </location>
</feature>
<feature type="splice variant" id="VSP_050614" description="In isoform 2." evidence="4">
    <original>ETGKMFT</original>
    <variation>GLLWLRA</variation>
    <location>
        <begin position="282"/>
        <end position="288"/>
    </location>
</feature>
<feature type="splice variant" id="VSP_050615" description="In isoform 2." evidence="4">
    <location>
        <begin position="289"/>
        <end position="458"/>
    </location>
</feature>
<feature type="sequence variant" id="VAR_017156" description="In dbSNP:rs1528.">
    <original>K</original>
    <variation>E</variation>
    <location>
        <position position="429"/>
    </location>
</feature>
<feature type="sequence variant" id="VAR_017157" description="In dbSNP:rs10788.">
    <original>G</original>
    <variation>E</variation>
    <location>
        <position position="457"/>
    </location>
</feature>
<dbReference type="EMBL" id="AJ243950">
    <property type="protein sequence ID" value="CAB60832.1"/>
    <property type="molecule type" value="mRNA"/>
</dbReference>
<dbReference type="EMBL" id="AJ243951">
    <property type="protein sequence ID" value="CAB60833.1"/>
    <property type="molecule type" value="mRNA"/>
</dbReference>
<dbReference type="EMBL" id="BC065375">
    <property type="protein sequence ID" value="AAH65375.1"/>
    <property type="molecule type" value="mRNA"/>
</dbReference>
<dbReference type="CCDS" id="CCDS7828.1">
    <molecule id="Q9UGK8-1"/>
</dbReference>
<dbReference type="RefSeq" id="NP_036271.1">
    <molecule id="Q9UGK8-1"/>
    <property type="nucleotide sequence ID" value="NM_012139.4"/>
</dbReference>
<dbReference type="SMR" id="Q9UGK8"/>
<dbReference type="BioGRID" id="117674">
    <property type="interactions" value="15"/>
</dbReference>
<dbReference type="FunCoup" id="Q9UGK8">
    <property type="interactions" value="1619"/>
</dbReference>
<dbReference type="IntAct" id="Q9UGK8">
    <property type="interactions" value="13"/>
</dbReference>
<dbReference type="MINT" id="Q9UGK8"/>
<dbReference type="STRING" id="9606.ENSP00000265965"/>
<dbReference type="GlyGen" id="Q9UGK8">
    <property type="glycosylation" value="1 site, 1 O-linked glycan (1 site)"/>
</dbReference>
<dbReference type="iPTMnet" id="Q9UGK8"/>
<dbReference type="PhosphoSitePlus" id="Q9UGK8"/>
<dbReference type="BioMuta" id="SERGEF"/>
<dbReference type="DMDM" id="38257790"/>
<dbReference type="jPOST" id="Q9UGK8"/>
<dbReference type="MassIVE" id="Q9UGK8"/>
<dbReference type="PaxDb" id="9606-ENSP00000265965"/>
<dbReference type="PeptideAtlas" id="Q9UGK8"/>
<dbReference type="ProteomicsDB" id="84229">
    <molecule id="Q9UGK8-1"/>
</dbReference>
<dbReference type="ProteomicsDB" id="84230">
    <molecule id="Q9UGK8-2"/>
</dbReference>
<dbReference type="Pumba" id="Q9UGK8"/>
<dbReference type="Antibodypedia" id="12179">
    <property type="antibodies" value="97 antibodies from 22 providers"/>
</dbReference>
<dbReference type="DNASU" id="26297"/>
<dbReference type="Ensembl" id="ENST00000265965.10">
    <molecule id="Q9UGK8-1"/>
    <property type="protein sequence ID" value="ENSP00000265965.5"/>
    <property type="gene ID" value="ENSG00000129158.11"/>
</dbReference>
<dbReference type="Ensembl" id="ENST00000528200.5">
    <molecule id="Q9UGK8-2"/>
    <property type="protein sequence ID" value="ENSP00000434188.1"/>
    <property type="gene ID" value="ENSG00000129158.11"/>
</dbReference>
<dbReference type="GeneID" id="26297"/>
<dbReference type="KEGG" id="hsa:26297"/>
<dbReference type="MANE-Select" id="ENST00000265965.10">
    <property type="protein sequence ID" value="ENSP00000265965.5"/>
    <property type="RefSeq nucleotide sequence ID" value="NM_012139.4"/>
    <property type="RefSeq protein sequence ID" value="NP_036271.1"/>
</dbReference>
<dbReference type="UCSC" id="uc001mnm.5">
    <molecule id="Q9UGK8-1"/>
    <property type="organism name" value="human"/>
</dbReference>
<dbReference type="AGR" id="HGNC:17499"/>
<dbReference type="CTD" id="26297"/>
<dbReference type="DisGeNET" id="26297"/>
<dbReference type="GeneCards" id="SERGEF"/>
<dbReference type="HGNC" id="HGNC:17499">
    <property type="gene designation" value="SERGEF"/>
</dbReference>
<dbReference type="HPA" id="ENSG00000129158">
    <property type="expression patterns" value="Low tissue specificity"/>
</dbReference>
<dbReference type="MIM" id="606051">
    <property type="type" value="gene"/>
</dbReference>
<dbReference type="neXtProt" id="NX_Q9UGK8"/>
<dbReference type="OpenTargets" id="ENSG00000129158"/>
<dbReference type="PharmGKB" id="PA143485610"/>
<dbReference type="VEuPathDB" id="HostDB:ENSG00000129158"/>
<dbReference type="eggNOG" id="KOG1426">
    <property type="taxonomic scope" value="Eukaryota"/>
</dbReference>
<dbReference type="GeneTree" id="ENSGT00940000160684"/>
<dbReference type="HOGENOM" id="CLU_005210_0_3_1"/>
<dbReference type="InParanoid" id="Q9UGK8"/>
<dbReference type="OMA" id="GWGNCRK"/>
<dbReference type="OrthoDB" id="10256179at2759"/>
<dbReference type="PAN-GO" id="Q9UGK8">
    <property type="GO annotations" value="6 GO annotations based on evolutionary models"/>
</dbReference>
<dbReference type="PhylomeDB" id="Q9UGK8"/>
<dbReference type="TreeFam" id="TF330842"/>
<dbReference type="PathwayCommons" id="Q9UGK8"/>
<dbReference type="SignaLink" id="Q9UGK8"/>
<dbReference type="BioGRID-ORCS" id="26297">
    <property type="hits" value="16 hits in 1168 CRISPR screens"/>
</dbReference>
<dbReference type="ChiTaRS" id="SERGEF">
    <property type="organism name" value="human"/>
</dbReference>
<dbReference type="GenomeRNAi" id="26297"/>
<dbReference type="Pharos" id="Q9UGK8">
    <property type="development level" value="Tdark"/>
</dbReference>
<dbReference type="PRO" id="PR:Q9UGK8"/>
<dbReference type="Proteomes" id="UP000005640">
    <property type="component" value="Chromosome 11"/>
</dbReference>
<dbReference type="RNAct" id="Q9UGK8">
    <property type="molecule type" value="protein"/>
</dbReference>
<dbReference type="Bgee" id="ENSG00000129158">
    <property type="expression patterns" value="Expressed in right frontal lobe and 168 other cell types or tissues"/>
</dbReference>
<dbReference type="ExpressionAtlas" id="Q9UGK8">
    <property type="expression patterns" value="baseline and differential"/>
</dbReference>
<dbReference type="GO" id="GO:0005737">
    <property type="term" value="C:cytoplasm"/>
    <property type="evidence" value="ECO:0000314"/>
    <property type="project" value="UniProtKB"/>
</dbReference>
<dbReference type="GO" id="GO:0005829">
    <property type="term" value="C:cytosol"/>
    <property type="evidence" value="ECO:0000314"/>
    <property type="project" value="HPA"/>
</dbReference>
<dbReference type="GO" id="GO:0005654">
    <property type="term" value="C:nucleoplasm"/>
    <property type="evidence" value="ECO:0000314"/>
    <property type="project" value="HPA"/>
</dbReference>
<dbReference type="GO" id="GO:0005634">
    <property type="term" value="C:nucleus"/>
    <property type="evidence" value="ECO:0000314"/>
    <property type="project" value="UniProtKB"/>
</dbReference>
<dbReference type="GO" id="GO:0005085">
    <property type="term" value="F:guanyl-nucleotide exchange factor activity"/>
    <property type="evidence" value="ECO:0000304"/>
    <property type="project" value="UniProtKB"/>
</dbReference>
<dbReference type="GO" id="GO:0050709">
    <property type="term" value="P:negative regulation of protein secretion"/>
    <property type="evidence" value="ECO:0000314"/>
    <property type="project" value="HGNC-UCL"/>
</dbReference>
<dbReference type="GO" id="GO:0007165">
    <property type="term" value="P:signal transduction"/>
    <property type="evidence" value="ECO:0000304"/>
    <property type="project" value="UniProtKB"/>
</dbReference>
<dbReference type="FunFam" id="2.130.10.30:FF:000029">
    <property type="entry name" value="Secretion-regulating guanine nucleotide exchange factor"/>
    <property type="match status" value="1"/>
</dbReference>
<dbReference type="FunFam" id="2.130.10.30:FF:000030">
    <property type="entry name" value="Secretion-regulating guanine nucleotide exchange factor"/>
    <property type="match status" value="1"/>
</dbReference>
<dbReference type="Gene3D" id="2.130.10.30">
    <property type="entry name" value="Regulator of chromosome condensation 1/beta-lactamase-inhibitor protein II"/>
    <property type="match status" value="2"/>
</dbReference>
<dbReference type="InterPro" id="IPR009091">
    <property type="entry name" value="RCC1/BLIP-II"/>
</dbReference>
<dbReference type="InterPro" id="IPR000408">
    <property type="entry name" value="Reg_chr_condens"/>
</dbReference>
<dbReference type="InterPro" id="IPR051625">
    <property type="entry name" value="Signaling_Regulatory_Domain"/>
</dbReference>
<dbReference type="PANTHER" id="PTHR22872">
    <property type="entry name" value="BTK-BINDING PROTEIN-RELATED"/>
    <property type="match status" value="1"/>
</dbReference>
<dbReference type="Pfam" id="PF25390">
    <property type="entry name" value="WD40_RLD"/>
    <property type="match status" value="1"/>
</dbReference>
<dbReference type="PRINTS" id="PR00633">
    <property type="entry name" value="RCCNDNSATION"/>
</dbReference>
<dbReference type="SUPFAM" id="SSF50985">
    <property type="entry name" value="RCC1/BLIP-II"/>
    <property type="match status" value="1"/>
</dbReference>
<dbReference type="PROSITE" id="PS00626">
    <property type="entry name" value="RCC1_2"/>
    <property type="match status" value="2"/>
</dbReference>
<dbReference type="PROSITE" id="PS50012">
    <property type="entry name" value="RCC1_3"/>
    <property type="match status" value="7"/>
</dbReference>
<gene>
    <name type="primary">SERGEF</name>
    <name type="synonym">DELGEF</name>
    <name type="synonym">GNEFR</name>
</gene>
<protein>
    <recommendedName>
        <fullName>Secretion-regulating guanine nucleotide exchange factor</fullName>
    </recommendedName>
    <alternativeName>
        <fullName>Deafness locus-associated putative guanine nucleotide exchange factor</fullName>
        <shortName>DelGEF</shortName>
    </alternativeName>
    <alternativeName>
        <fullName>Guanine nucleotide exchange factor-related protein</fullName>
    </alternativeName>
</protein>
<evidence type="ECO:0000256" key="1">
    <source>
        <dbReference type="SAM" id="MobiDB-lite"/>
    </source>
</evidence>
<evidence type="ECO:0000269" key="2">
    <source>
    </source>
</evidence>
<evidence type="ECO:0000269" key="3">
    <source>
    </source>
</evidence>
<evidence type="ECO:0000303" key="4">
    <source>
    </source>
</evidence>
<evidence type="ECO:0007744" key="5">
    <source>
    </source>
</evidence>
<proteinExistence type="evidence at protein level"/>
<organism>
    <name type="scientific">Homo sapiens</name>
    <name type="common">Human</name>
    <dbReference type="NCBI Taxonomy" id="9606"/>
    <lineage>
        <taxon>Eukaryota</taxon>
        <taxon>Metazoa</taxon>
        <taxon>Chordata</taxon>
        <taxon>Craniata</taxon>
        <taxon>Vertebrata</taxon>
        <taxon>Euteleostomi</taxon>
        <taxon>Mammalia</taxon>
        <taxon>Eutheria</taxon>
        <taxon>Euarchontoglires</taxon>
        <taxon>Primates</taxon>
        <taxon>Haplorrhini</taxon>
        <taxon>Catarrhini</taxon>
        <taxon>Hominidae</taxon>
        <taxon>Homo</taxon>
    </lineage>
</organism>
<sequence length="458" mass="48981">MEREPSASEAAPAAAALFAWGANSYGQLGLGHKEDVLLPQQLNDFCKPRSVRRITGGGGHSAVVTDGGDLFVCGLNKDGQLGLGHTEDIPYFTPCKSLFGCPIQQVACGWDFTIMLTENGQVLSCGSNSFGQLGVPHGPRRCVVPQAIELHKEKVVCIAAGLRHAVAATASGIVFQWGTGLASCGRRLCPGQTLPLFFTAKEPSRVTGLENSKAMCVLAGSDHSASLTDAGEVYVWGSNKHGQLANEAAFLPVPQKIEAHCFQNEKVTAIWSGWTHLVAQTETGKMFTWGRADYGQLGRKLETYEGWKLEKQDSFLPCSRPPNSMPSSPHCLTGATEVSCGSEHNLAIIGGVCYSWGWNEHGMCGDGTEANVWAPKPVQALLSSSGLLVGCGAGHSLALCQLPAHPALVQDPKVTYLSPDAIEDTESQKAMDKERNWKERQSETSTQSQSDWSRNGGL</sequence>
<keyword id="KW-0025">Alternative splicing</keyword>
<keyword id="KW-0963">Cytoplasm</keyword>
<keyword id="KW-0344">Guanine-nucleotide releasing factor</keyword>
<keyword id="KW-0539">Nucleus</keyword>
<keyword id="KW-0597">Phosphoprotein</keyword>
<keyword id="KW-1267">Proteomics identification</keyword>
<keyword id="KW-1185">Reference proteome</keyword>
<keyword id="KW-0677">Repeat</keyword>
<reference key="1">
    <citation type="journal article" date="1999" name="FEBS Lett.">
        <title>DelGEF, an RCC1-related protein encoded by a gene on chromosome 11p14 critical for two forms of hereditary deafness.</title>
        <authorList>
            <person name="Uhlmann J."/>
            <person name="Wiemann S."/>
            <person name="Ponstingl H."/>
        </authorList>
    </citation>
    <scope>NUCLEOTIDE SEQUENCE [MRNA] (ISOFORMS 1 AND 2)</scope>
    <scope>SUBCELLULAR LOCATION</scope>
    <source>
        <tissue>Fetal brain</tissue>
    </source>
</reference>
<reference key="2">
    <citation type="journal article" date="2004" name="Genome Res.">
        <title>The status, quality, and expansion of the NIH full-length cDNA project: the Mammalian Gene Collection (MGC).</title>
        <authorList>
            <consortium name="The MGC Project Team"/>
        </authorList>
    </citation>
    <scope>NUCLEOTIDE SEQUENCE [LARGE SCALE MRNA] (ISOFORM 1)</scope>
    <source>
        <tissue>Ovary</tissue>
    </source>
</reference>
<reference key="3">
    <citation type="journal article" date="2002" name="FEBS Lett.">
        <title>DelGEF, a homologue of the Ran guanine nucleotide exchange factor RanGEF, binds to the exocyst component Sec5 and modulates secretion.</title>
        <authorList>
            <person name="Sjoelinder M."/>
            <person name="Uhlmann J."/>
            <person name="Ponstingl H."/>
        </authorList>
    </citation>
    <scope>INTERACTION WITH SEC5</scope>
</reference>
<reference key="4">
    <citation type="journal article" date="2007" name="Science">
        <title>ATM and ATR substrate analysis reveals extensive protein networks responsive to DNA damage.</title>
        <authorList>
            <person name="Matsuoka S."/>
            <person name="Ballif B.A."/>
            <person name="Smogorzewska A."/>
            <person name="McDonald E.R. III"/>
            <person name="Hurov K.E."/>
            <person name="Luo J."/>
            <person name="Bakalarski C.E."/>
            <person name="Zhao Z."/>
            <person name="Solimini N."/>
            <person name="Lerenthal Y."/>
            <person name="Shiloh Y."/>
            <person name="Gygi S.P."/>
            <person name="Elledge S.J."/>
        </authorList>
    </citation>
    <scope>IDENTIFICATION BY MASS SPECTROMETRY [LARGE SCALE ANALYSIS]</scope>
    <source>
        <tissue>Embryonic kidney</tissue>
    </source>
</reference>
<reference key="5">
    <citation type="journal article" date="2013" name="J. Proteome Res.">
        <title>Toward a comprehensive characterization of a human cancer cell phosphoproteome.</title>
        <authorList>
            <person name="Zhou H."/>
            <person name="Di Palma S."/>
            <person name="Preisinger C."/>
            <person name="Peng M."/>
            <person name="Polat A.N."/>
            <person name="Heck A.J."/>
            <person name="Mohammed S."/>
        </authorList>
    </citation>
    <scope>PHOSPHORYLATION [LARGE SCALE ANALYSIS] AT SER-427</scope>
    <scope>IDENTIFICATION BY MASS SPECTROMETRY [LARGE SCALE ANALYSIS]</scope>
    <source>
        <tissue>Erythroleukemia</tissue>
    </source>
</reference>
<accession>Q9UGK8</accession>
<accession>Q9UGK9</accession>
<comment type="function">
    <text>Probable guanine nucleotide exchange factor (GEF), which may be involved in the secretion process.</text>
</comment>
<comment type="subunit">
    <text evidence="3">Interacts with SEC5. The interaction occurs only in the presence of magnesium or manganese and is stimulated by dCTP or GTP.</text>
</comment>
<comment type="interaction">
    <interactant intactId="EBI-465368">
        <id>Q9UGK8</id>
    </interactant>
    <interactant intactId="EBI-465363">
        <id>Q96FX2</id>
        <label>DPH3</label>
    </interactant>
    <organismsDiffer>false</organismsDiffer>
    <experiments>8</experiments>
</comment>
<comment type="interaction">
    <interactant intactId="EBI-465368">
        <id>Q9UGK8</id>
    </interactant>
    <interactant intactId="EBI-1759806">
        <id>O75593</id>
        <label>FOXH1</label>
    </interactant>
    <organismsDiffer>false</organismsDiffer>
    <experiments>3</experiments>
</comment>
<comment type="interaction">
    <interactant intactId="EBI-465368">
        <id>Q9UGK8</id>
    </interactant>
    <interactant intactId="EBI-740220">
        <id>O14964</id>
        <label>HGS</label>
    </interactant>
    <organismsDiffer>false</organismsDiffer>
    <experiments>3</experiments>
</comment>
<comment type="interaction">
    <interactant intactId="EBI-465368">
        <id>Q9UGK8</id>
    </interactant>
    <interactant intactId="EBI-710124">
        <id>O60341</id>
        <label>KDM1A</label>
    </interactant>
    <organismsDiffer>false</organismsDiffer>
    <experiments>2</experiments>
</comment>
<comment type="interaction">
    <interactant intactId="EBI-465368">
        <id>Q9UGK8</id>
    </interactant>
    <interactant intactId="EBI-748265">
        <id>P78337</id>
        <label>PITX1</label>
    </interactant>
    <organismsDiffer>false</organismsDiffer>
    <experiments>3</experiments>
</comment>
<comment type="interaction">
    <interactant intactId="EBI-465368">
        <id>Q9UGK8</id>
    </interactant>
    <interactant intactId="EBI-912440">
        <id>Q96LA8</id>
        <label>PRMT6</label>
    </interactant>
    <organismsDiffer>false</organismsDiffer>
    <experiments>2</experiments>
</comment>
<comment type="interaction">
    <interactant intactId="EBI-465368">
        <id>Q9UGK8</id>
    </interactant>
    <interactant intactId="EBI-11959123">
        <id>Q99932-2</id>
        <label>SPAG8</label>
    </interactant>
    <organismsDiffer>false</organismsDiffer>
    <experiments>3</experiments>
</comment>
<comment type="subcellular location">
    <subcellularLocation>
        <location evidence="2">Cytoplasm</location>
    </subcellularLocation>
    <subcellularLocation>
        <location evidence="2">Nucleus</location>
    </subcellularLocation>
</comment>
<comment type="alternative products">
    <event type="alternative splicing"/>
    <isoform>
        <id>Q9UGK8-1</id>
        <name>1</name>
        <name>DelGEF1</name>
        <sequence type="displayed"/>
    </isoform>
    <isoform>
        <id>Q9UGK8-2</id>
        <name>2</name>
        <name>DelGEF2</name>
        <sequence type="described" ref="VSP_050614 VSP_050615"/>
    </isoform>
</comment>
<name>SRGEF_HUMAN</name>